<reference key="1">
    <citation type="journal article" date="1989" name="J. Biol. Chem.">
        <title>Xenopus laevis contains two nonallelic preproinsulin genes. cDNA cloning and evolutionary perspective.</title>
        <authorList>
            <person name="Shuldiner A.R."/>
            <person name="Phillips S."/>
            <person name="Roberts C.T. Jr."/>
            <person name="Leroith D."/>
            <person name="Roth J."/>
        </authorList>
    </citation>
    <scope>NUCLEOTIDE SEQUENCE [MRNA]</scope>
</reference>
<reference key="2">
    <citation type="journal article" date="1989" name="Endocrinology">
        <title>Isolation and characterization of two different insulins from an amphibian, Xenopus laevis.</title>
        <authorList>
            <person name="Shuldiner A.R."/>
            <person name="Bennett C."/>
            <person name="Robinson E.A."/>
            <person name="Roth J."/>
        </authorList>
    </citation>
    <scope>PROTEIN SEQUENCE OF 24-53 AND 86-106</scope>
</reference>
<keyword id="KW-0119">Carbohydrate metabolism</keyword>
<keyword id="KW-0165">Cleavage on pair of basic residues</keyword>
<keyword id="KW-0903">Direct protein sequencing</keyword>
<keyword id="KW-1015">Disulfide bond</keyword>
<keyword id="KW-0313">Glucose metabolism</keyword>
<keyword id="KW-0372">Hormone</keyword>
<keyword id="KW-1185">Reference proteome</keyword>
<keyword id="KW-0964">Secreted</keyword>
<keyword id="KW-0732">Signal</keyword>
<dbReference type="EMBL" id="M24442">
    <property type="protein sequence ID" value="AAA49887.1"/>
    <property type="molecule type" value="mRNA"/>
</dbReference>
<dbReference type="PIR" id="B33847">
    <property type="entry name" value="IPXL2"/>
</dbReference>
<dbReference type="RefSeq" id="NP_001079350.1">
    <property type="nucleotide sequence ID" value="NM_001085881.1"/>
</dbReference>
<dbReference type="SMR" id="P12707"/>
<dbReference type="GeneID" id="378695"/>
<dbReference type="KEGG" id="xla:378695"/>
<dbReference type="AGR" id="Xenbase:XB-GENE-864803"/>
<dbReference type="CTD" id="378695"/>
<dbReference type="Xenbase" id="XB-GENE-864803">
    <property type="gene designation" value="ins.L"/>
</dbReference>
<dbReference type="OMA" id="LANQHLC"/>
<dbReference type="OrthoDB" id="10019596at2759"/>
<dbReference type="Proteomes" id="UP000186698">
    <property type="component" value="Chromosome 4L"/>
</dbReference>
<dbReference type="Bgee" id="378695">
    <property type="expression patterns" value="Expressed in pancreas and 4 other cell types or tissues"/>
</dbReference>
<dbReference type="GO" id="GO:0005615">
    <property type="term" value="C:extracellular space"/>
    <property type="evidence" value="ECO:0000318"/>
    <property type="project" value="GO_Central"/>
</dbReference>
<dbReference type="GO" id="GO:0005179">
    <property type="term" value="F:hormone activity"/>
    <property type="evidence" value="ECO:0007669"/>
    <property type="project" value="UniProtKB-KW"/>
</dbReference>
<dbReference type="GO" id="GO:0006006">
    <property type="term" value="P:glucose metabolic process"/>
    <property type="evidence" value="ECO:0007669"/>
    <property type="project" value="UniProtKB-KW"/>
</dbReference>
<dbReference type="CDD" id="cd04367">
    <property type="entry name" value="IlGF_insulin_like"/>
    <property type="match status" value="1"/>
</dbReference>
<dbReference type="FunFam" id="1.10.100.10:FF:000003">
    <property type="entry name" value="Insulin"/>
    <property type="match status" value="1"/>
</dbReference>
<dbReference type="Gene3D" id="1.10.100.10">
    <property type="entry name" value="Insulin-like"/>
    <property type="match status" value="1"/>
</dbReference>
<dbReference type="InterPro" id="IPR004825">
    <property type="entry name" value="Insulin"/>
</dbReference>
<dbReference type="InterPro" id="IPR016179">
    <property type="entry name" value="Insulin-like"/>
</dbReference>
<dbReference type="InterPro" id="IPR036438">
    <property type="entry name" value="Insulin-like_sf"/>
</dbReference>
<dbReference type="InterPro" id="IPR022353">
    <property type="entry name" value="Insulin_CS"/>
</dbReference>
<dbReference type="InterPro" id="IPR022352">
    <property type="entry name" value="Insulin_family"/>
</dbReference>
<dbReference type="PANTHER" id="PTHR11454:SF9">
    <property type="entry name" value="INSULIN"/>
    <property type="match status" value="1"/>
</dbReference>
<dbReference type="PANTHER" id="PTHR11454">
    <property type="entry name" value="INSULIN/INSULIN GROWTH FACTOR"/>
    <property type="match status" value="1"/>
</dbReference>
<dbReference type="Pfam" id="PF00049">
    <property type="entry name" value="Insulin"/>
    <property type="match status" value="1"/>
</dbReference>
<dbReference type="PRINTS" id="PR00277">
    <property type="entry name" value="INSULIN"/>
</dbReference>
<dbReference type="PRINTS" id="PR00276">
    <property type="entry name" value="INSULINFAMLY"/>
</dbReference>
<dbReference type="SMART" id="SM00078">
    <property type="entry name" value="IlGF"/>
    <property type="match status" value="1"/>
</dbReference>
<dbReference type="SUPFAM" id="SSF56994">
    <property type="entry name" value="Insulin-like"/>
    <property type="match status" value="1"/>
</dbReference>
<dbReference type="PROSITE" id="PS00262">
    <property type="entry name" value="INSULIN"/>
    <property type="match status" value="1"/>
</dbReference>
<accession>P12707</accession>
<gene>
    <name type="primary">ins-b</name>
    <name type="synonym">ins2</name>
</gene>
<name>INS2_XENLA</name>
<feature type="signal peptide" evidence="1">
    <location>
        <begin position="1"/>
        <end position="23"/>
    </location>
</feature>
<feature type="peptide" id="PRO_0000015932" description="Insulin-2 B chain">
    <location>
        <begin position="24"/>
        <end position="53"/>
    </location>
</feature>
<feature type="propeptide" id="PRO_0000015933" description="C peptide">
    <location>
        <begin position="56"/>
        <end position="83"/>
    </location>
</feature>
<feature type="peptide" id="PRO_0000015934" description="Insulin-2 A chain">
    <location>
        <begin position="86"/>
        <end position="106"/>
    </location>
</feature>
<feature type="disulfide bond" description="Interchain (between B and A chains)">
    <location>
        <begin position="30"/>
        <end position="92"/>
    </location>
</feature>
<feature type="disulfide bond" description="Interchain (between B and A chains)">
    <location>
        <begin position="42"/>
        <end position="105"/>
    </location>
</feature>
<feature type="disulfide bond">
    <location>
        <begin position="91"/>
        <end position="96"/>
    </location>
</feature>
<comment type="function">
    <text>Insulin decreases blood glucose concentration. It increases cell permeability to monosaccharides, amino acids and fatty acids. It accelerates glycolysis, the pentose phosphate cycle, and glycogen synthesis in liver.</text>
</comment>
<comment type="subunit">
    <text>Heterodimer of a B chain and an A chain linked by two disulfide bonds.</text>
</comment>
<comment type="subcellular location">
    <subcellularLocation>
        <location>Secreted</location>
    </subcellularLocation>
</comment>
<comment type="similarity">
    <text evidence="2">Belongs to the insulin family.</text>
</comment>
<sequence>MALWMQCLPLVLVLLFSTPNTEALANQHLCGSHLVEALYLVCGDRGFFYYPKIKRDIEQAQVNGPQDNELDGMQFQPQEYQKMKRGIVEQCCHSTCSLFQLENYCN</sequence>
<protein>
    <recommendedName>
        <fullName>Insulin-2</fullName>
    </recommendedName>
    <component>
        <recommendedName>
            <fullName>Insulin-2 B chain</fullName>
        </recommendedName>
    </component>
    <component>
        <recommendedName>
            <fullName>Insulin-2 A chain</fullName>
        </recommendedName>
    </component>
</protein>
<organism>
    <name type="scientific">Xenopus laevis</name>
    <name type="common">African clawed frog</name>
    <dbReference type="NCBI Taxonomy" id="8355"/>
    <lineage>
        <taxon>Eukaryota</taxon>
        <taxon>Metazoa</taxon>
        <taxon>Chordata</taxon>
        <taxon>Craniata</taxon>
        <taxon>Vertebrata</taxon>
        <taxon>Euteleostomi</taxon>
        <taxon>Amphibia</taxon>
        <taxon>Batrachia</taxon>
        <taxon>Anura</taxon>
        <taxon>Pipoidea</taxon>
        <taxon>Pipidae</taxon>
        <taxon>Xenopodinae</taxon>
        <taxon>Xenopus</taxon>
        <taxon>Xenopus</taxon>
    </lineage>
</organism>
<evidence type="ECO:0000269" key="1">
    <source>
    </source>
</evidence>
<evidence type="ECO:0000305" key="2"/>
<proteinExistence type="evidence at protein level"/>